<evidence type="ECO:0000255" key="1">
    <source>
        <dbReference type="PROSITE-ProRule" id="PRU00041"/>
    </source>
</evidence>
<evidence type="ECO:0000255" key="2">
    <source>
        <dbReference type="PROSITE-ProRule" id="PRU00104"/>
    </source>
</evidence>
<evidence type="ECO:0000255" key="3">
    <source>
        <dbReference type="PROSITE-ProRule" id="PRU00224"/>
    </source>
</evidence>
<evidence type="ECO:0000256" key="4">
    <source>
        <dbReference type="SAM" id="MobiDB-lite"/>
    </source>
</evidence>
<evidence type="ECO:0000269" key="5">
    <source>
    </source>
</evidence>
<evidence type="ECO:0000269" key="6">
    <source>
    </source>
</evidence>
<evidence type="ECO:0000269" key="7">
    <source>
    </source>
</evidence>
<evidence type="ECO:0000269" key="8">
    <source>
    </source>
</evidence>
<evidence type="ECO:0000269" key="9">
    <source>
    </source>
</evidence>
<evidence type="ECO:0000269" key="10">
    <source>
    </source>
</evidence>
<evidence type="ECO:0000269" key="11">
    <source>
    </source>
</evidence>
<evidence type="ECO:0000269" key="12">
    <source>
    </source>
</evidence>
<evidence type="ECO:0000269" key="13">
    <source>
    </source>
</evidence>
<evidence type="ECO:0000269" key="14">
    <source>
    </source>
</evidence>
<evidence type="ECO:0000269" key="15">
    <source>
    </source>
</evidence>
<evidence type="ECO:0000269" key="16">
    <source>
    </source>
</evidence>
<evidence type="ECO:0000269" key="17">
    <source>
    </source>
</evidence>
<evidence type="ECO:0000269" key="18">
    <source>
    </source>
</evidence>
<evidence type="ECO:0000269" key="19">
    <source>
    </source>
</evidence>
<evidence type="ECO:0000269" key="20">
    <source>
    </source>
</evidence>
<evidence type="ECO:0000269" key="21">
    <source>
    </source>
</evidence>
<evidence type="ECO:0000269" key="22">
    <source>
    </source>
</evidence>
<evidence type="ECO:0000269" key="23">
    <source>
    </source>
</evidence>
<evidence type="ECO:0000305" key="24"/>
<evidence type="ECO:0000305" key="25">
    <source>
    </source>
</evidence>
<evidence type="ECO:0000305" key="26">
    <source>
    </source>
</evidence>
<evidence type="ECO:0007744" key="27">
    <source>
    </source>
</evidence>
<evidence type="ECO:0007829" key="28">
    <source>
        <dbReference type="PDB" id="3OLM"/>
    </source>
</evidence>
<evidence type="ECO:0007829" key="29">
    <source>
        <dbReference type="PDB" id="4LCD"/>
    </source>
</evidence>
<evidence type="ECO:0007829" key="30">
    <source>
        <dbReference type="PDB" id="5HPL"/>
    </source>
</evidence>
<keyword id="KW-0002">3D-structure</keyword>
<keyword id="KW-0963">Cytoplasm</keyword>
<keyword id="KW-0206">Cytoskeleton</keyword>
<keyword id="KW-1017">Isopeptide bond</keyword>
<keyword id="KW-0539">Nucleus</keyword>
<keyword id="KW-1185">Reference proteome</keyword>
<keyword id="KW-0677">Repeat</keyword>
<keyword id="KW-0808">Transferase</keyword>
<keyword id="KW-0832">Ubl conjugation</keyword>
<keyword id="KW-0833">Ubl conjugation pathway</keyword>
<accession>P39940</accession>
<accession>D3DM31</accession>
<comment type="function">
    <text evidence="5 6 7 8 10 11 12 13 15 17 18 19 20 22 23">E3 ubiquitin-protein ligase which accepts ubiquitin from an E2 ubiquitin-conjugating enzyme in the form of a thioester and then directly transfers the ubiquitin to targeted substrates (PubMed:15933713, PubMed:19920177, PubMed:30893611, PubMed:7708685). Component of a RSP5 ubiquitin ligase complex which specifies polyubiquitination and intracellular trafficking of the general amino acid permease GAP1 as well as other cell surface proteins like GAP1, FUR4, MAL61, PMA1 and STE2 (PubMed:8596462). The RSP5-BUL1/2 complex is also necessary for the heat-shock element (HSE)-mediated gene expression, nitrogen starvation GLN3-dependent transcription, pressure-induced differential regulation of the two tryptophan permeases TAT1 and TAT2 and sorting efficiency into multivesicular bodies (PubMed:12821147, PubMed:14560004, PubMed:15020711, PubMed:15247235, PubMed:16864574, PubMed:17079730, PubMed:9931424). The RSP5-UBA1-UBC5 ubiquitin ligase complex ubiquitinates RPO21 forming 'Lys-63'-linked polyubiquitin chains (PubMed:19920177, PubMed:9858558). Plays a role in tolerance to o-dinitrobenzene (PubMed:12163175). Involved in actin cytoskeleton organization and dynamics (PubMed:22000681). Ubiquitinates the LAS17-binding proteins LSB1 and PIN3/LSB2 without directing them for degradation and affects LAS17 levels in a SLA1-dependent and LSB1/2-independent manner (PubMed:22000681). Also involved in the degradation of non-functional 18S rRNAs in response to stalled ribosomes by mediating polyubiquitination of monoubiquitinated RPS3/uS3: mediates formation of 'Lys-63'-linked polyubiquitin chains on monoubiquitined RPS3/uS3, promoting the degradation of non-functional 18S rRNAs (PubMed:30893611).</text>
</comment>
<comment type="catalytic activity">
    <reaction evidence="25 26">
        <text>S-ubiquitinyl-[E2 ubiquitin-conjugating enzyme]-L-cysteine + [acceptor protein]-L-lysine = [E2 ubiquitin-conjugating enzyme]-L-cysteine + N(6)-ubiquitinyl-[acceptor protein]-L-lysine.</text>
        <dbReference type="EC" id="2.3.2.26"/>
    </reaction>
</comment>
<comment type="pathway">
    <text evidence="18">Protein modification; protein ubiquitination.</text>
</comment>
<comment type="subunit">
    <text evidence="5 9 11 13 14 15 16 17 21 23 25">Component of the RSP5-BUL1/2 ubiquitin ligase complex composed of at least RSP5 and BUL1 or BUL2 (PubMed:8668140, PubMed:9931424). Component of the RSP5-UBA1-UBC5 ubiquitin ligase complex composed of E3 RSP5, E1 UBA1 and E2 UBC5 (Probable). Also forms a ternary complex with RUP1 and UBP2 (PubMed:15933713). Interacts (via WW domains) with LSB1 (PubMed:22000681). Interacts (via WW domains) with PIN3/LSB2 (PubMed:22000681). Interacts (via WW domains) with RCR1 (via PY motifs) (PubMed:17213653). Interacts with UBP2; the interaction is direct (PubMed:19920177). Interacts with HSE1 (PubMed:15086794, PubMed:17079730). Interacts with LAS17 (PubMed:22000681). Interacts with ROG3 (PubMed:12163175). Interacts with ROD1 (PubMed:12163175). Interacts with RVS167 (PubMed:22000681). Interacts with ubiquitin (PubMed:21399621).</text>
</comment>
<comment type="interaction">
    <interactant intactId="EBI-16219">
        <id>P39940</id>
    </interactant>
    <interactant intactId="EBI-38674">
        <id>Q07622</id>
        <label>ACK1</label>
    </interactant>
    <organismsDiffer>false</organismsDiffer>
    <experiments>3</experiments>
</comment>
<comment type="interaction">
    <interactant intactId="EBI-16219">
        <id>P39940</id>
    </interactant>
    <interactant intactId="EBI-14267">
        <id>P80210</id>
        <label>ADE12</label>
    </interactant>
    <organismsDiffer>false</organismsDiffer>
    <experiments>2</experiments>
</comment>
<comment type="interaction">
    <interactant intactId="EBI-16219">
        <id>P39940</id>
    </interactant>
    <interactant intactId="EBI-26358">
        <id>P36117</id>
        <label>ALY1</label>
    </interactant>
    <organismsDiffer>false</organismsDiffer>
    <experiments>4</experiments>
</comment>
<comment type="interaction">
    <interactant intactId="EBI-16219">
        <id>P39940</id>
    </interactant>
    <interactant intactId="EBI-25974">
        <id>P47029</id>
        <label>ALY2</label>
    </interactant>
    <organismsDiffer>false</organismsDiffer>
    <experiments>5</experiments>
</comment>
<comment type="interaction">
    <interactant intactId="EBI-16219">
        <id>P39940</id>
    </interactant>
    <interactant intactId="EBI-27197">
        <id>P18634</id>
        <label>ART10</label>
    </interactant>
    <organismsDiffer>false</organismsDiffer>
    <experiments>5</experiments>
</comment>
<comment type="interaction">
    <interactant intactId="EBI-16219">
        <id>P39940</id>
    </interactant>
    <interactant intactId="EBI-23201">
        <id>P53244</id>
        <label>ART5</label>
    </interactant>
    <organismsDiffer>false</organismsDiffer>
    <experiments>4</experiments>
</comment>
<comment type="interaction">
    <interactant intactId="EBI-16219">
        <id>P39940</id>
    </interactant>
    <interactant intactId="EBI-10016">
        <id>Q05979</id>
        <label>BNA5</label>
    </interactant>
    <organismsDiffer>false</organismsDiffer>
    <experiments>2</experiments>
</comment>
<comment type="interaction">
    <interactant intactId="EBI-16219">
        <id>P39940</id>
    </interactant>
    <interactant intactId="EBI-3881">
        <id>P48524</id>
        <label>BUL1</label>
    </interactant>
    <organismsDiffer>false</organismsDiffer>
    <experiments>4</experiments>
</comment>
<comment type="interaction">
    <interactant intactId="EBI-16219">
        <id>P39940</id>
    </interactant>
    <interactant intactId="EBI-4192">
        <id>Q00684</id>
        <label>CDC14</label>
    </interactant>
    <organismsDiffer>false</organismsDiffer>
    <experiments>2</experiments>
</comment>
<comment type="interaction">
    <interactant intactId="EBI-16219">
        <id>P39940</id>
    </interactant>
    <interactant intactId="EBI-32379">
        <id>Q12734</id>
        <label>CSR2</label>
    </interactant>
    <organismsDiffer>false</organismsDiffer>
    <experiments>2</experiments>
</comment>
<comment type="interaction">
    <interactant intactId="EBI-16219">
        <id>P39940</id>
    </interactant>
    <interactant intactId="EBI-4061">
        <id>P15202</id>
        <label>CTA1</label>
    </interactant>
    <organismsDiffer>false</organismsDiffer>
    <experiments>2</experiments>
</comment>
<comment type="interaction">
    <interactant intactId="EBI-16219">
        <id>P39940</id>
    </interactant>
    <interactant intactId="EBI-37580">
        <id>Q08412</id>
        <label>CUE5</label>
    </interactant>
    <organismsDiffer>false</organismsDiffer>
    <experiments>3</experiments>
</comment>
<comment type="interaction">
    <interactant intactId="EBI-16219">
        <id>P39940</id>
    </interactant>
    <interactant intactId="EBI-27668">
        <id>P54005</id>
        <label>DIA1</label>
    </interactant>
    <organismsDiffer>false</organismsDiffer>
    <experiments>3</experiments>
</comment>
<comment type="interaction">
    <interactant intactId="EBI-16219">
        <id>P39940</id>
    </interactant>
    <interactant intactId="EBI-27885">
        <id>P53759</id>
        <label>DUS1</label>
    </interactant>
    <organismsDiffer>false</organismsDiffer>
    <experiments>2</experiments>
</comment>
<comment type="interaction">
    <interactant intactId="EBI-16219">
        <id>P39940</id>
    </interactant>
    <interactant intactId="EBI-21359">
        <id>P38167</id>
        <label>ECM21</label>
    </interactant>
    <organismsDiffer>false</organismsDiffer>
    <experiments>2</experiments>
</comment>
<comment type="interaction">
    <interactant intactId="EBI-16219">
        <id>P39940</id>
    </interactant>
    <interactant intactId="EBI-6475">
        <id>P00925</id>
        <label>ENO2</label>
    </interactant>
    <organismsDiffer>false</organismsDiffer>
    <experiments>2</experiments>
</comment>
<comment type="interaction">
    <interactant intactId="EBI-16219">
        <id>P39940</id>
    </interactant>
    <interactant intactId="EBI-26445">
        <id>P36141</id>
        <label>FMP46</label>
    </interactant>
    <organismsDiffer>false</organismsDiffer>
    <experiments>2</experiments>
</comment>
<comment type="interaction">
    <interactant intactId="EBI-16219">
        <id>P39940</id>
    </interactant>
    <interactant intactId="EBI-13389">
        <id>P06738</id>
        <label>GPH1</label>
    </interactant>
    <organismsDiffer>false</organismsDiffer>
    <experiments>2</experiments>
</comment>
<comment type="interaction">
    <interactant intactId="EBI-16219">
        <id>P39940</id>
    </interactant>
    <interactant intactId="EBI-5711">
        <id>P32347</id>
        <label>HEM12</label>
    </interactant>
    <organismsDiffer>false</organismsDiffer>
    <experiments>2</experiments>
</comment>
<comment type="interaction">
    <interactant intactId="EBI-16219">
        <id>P39940</id>
    </interactant>
    <interactant intactId="EBI-10464">
        <id>P53051</id>
        <label>IMA1</label>
    </interactant>
    <organismsDiffer>false</organismsDiffer>
    <experiments>2</experiments>
</comment>
<comment type="interaction">
    <interactant intactId="EBI-16219">
        <id>P39940</id>
    </interactant>
    <interactant intactId="EBI-9338">
        <id>P00817</id>
        <label>IPP1</label>
    </interactant>
    <organismsDiffer>false</organismsDiffer>
    <experiments>2</experiments>
</comment>
<comment type="interaction">
    <interactant intactId="EBI-16219">
        <id>P39940</id>
    </interactant>
    <interactant intactId="EBI-2113927">
        <id>Q12502</id>
        <label>LDB19</label>
    </interactant>
    <organismsDiffer>false</organismsDiffer>
    <experiments>3</experiments>
</comment>
<comment type="interaction">
    <interactant intactId="EBI-16219">
        <id>P39940</id>
    </interactant>
    <interactant intactId="EBI-23329">
        <id>P53281</id>
        <label>LSB1</label>
    </interactant>
    <organismsDiffer>false</organismsDiffer>
    <experiments>2</experiments>
</comment>
<comment type="interaction">
    <interactant intactId="EBI-16219">
        <id>P39940</id>
    </interactant>
    <interactant intactId="EBI-10264">
        <id>P38998</id>
        <label>LYS1</label>
    </interactant>
    <organismsDiffer>false</organismsDiffer>
    <experiments>3</experiments>
</comment>
<comment type="interaction">
    <interactant intactId="EBI-16219">
        <id>P39940</id>
    </interactant>
    <interactant intactId="EBI-10276">
        <id>P49367</id>
        <label>LYS4</label>
    </interactant>
    <organismsDiffer>false</organismsDiffer>
    <experiments>2</experiments>
</comment>
<comment type="interaction">
    <interactant intactId="EBI-16219">
        <id>P39940</id>
    </interactant>
    <interactant intactId="EBI-10565">
        <id>P36060</id>
        <label>MCR1</label>
    </interactant>
    <organismsDiffer>false</organismsDiffer>
    <experiments>2</experiments>
</comment>
<comment type="interaction">
    <interactant intactId="EBI-16219">
        <id>P39940</id>
    </interactant>
    <interactant intactId="EBI-10428">
        <id>P30952</id>
        <label>MLS1</label>
    </interactant>
    <organismsDiffer>false</organismsDiffer>
    <experiments>3</experiments>
</comment>
<comment type="interaction">
    <interactant intactId="EBI-16219">
        <id>P39940</id>
    </interactant>
    <interactant intactId="EBI-12114">
        <id>Q01560</id>
        <label>NPL3</label>
    </interactant>
    <organismsDiffer>false</organismsDiffer>
    <experiments>2</experiments>
</comment>
<comment type="interaction">
    <interactant intactId="EBI-16219">
        <id>P39940</id>
    </interactant>
    <interactant intactId="EBI-12218">
        <id>P39683</id>
        <label>NPT1</label>
    </interactant>
    <organismsDiffer>false</organismsDiffer>
    <experiments>2</experiments>
</comment>
<comment type="interaction">
    <interactant intactId="EBI-16219">
        <id>P39940</id>
    </interactant>
    <interactant intactId="EBI-13770">
        <id>P10963</id>
        <label>PCK1</label>
    </interactant>
    <organismsDiffer>false</organismsDiffer>
    <experiments>2</experiments>
</comment>
<comment type="interaction">
    <interactant intactId="EBI-16219">
        <id>P39940</id>
    </interactant>
    <interactant intactId="EBI-9435">
        <id>P16862</id>
        <label>PFK2</label>
    </interactant>
    <organismsDiffer>false</organismsDiffer>
    <experiments>3</experiments>
</comment>
<comment type="interaction">
    <interactant intactId="EBI-16219">
        <id>P39940</id>
    </interactant>
    <interactant intactId="EBI-26862">
        <id>P36069</id>
        <label>PMU1</label>
    </interactant>
    <organismsDiffer>false</organismsDiffer>
    <experiments>2</experiments>
</comment>
<comment type="interaction">
    <interactant intactId="EBI-16219">
        <id>P39940</id>
    </interactant>
    <interactant intactId="EBI-14183">
        <id>P25044</id>
        <label>PTP1</label>
    </interactant>
    <organismsDiffer>false</organismsDiffer>
    <experiments>2</experiments>
</comment>
<comment type="interaction">
    <interactant intactId="EBI-16219">
        <id>P39940</id>
    </interactant>
    <interactant intactId="EBI-14358">
        <id>P11154</id>
        <label>PYC1</label>
    </interactant>
    <organismsDiffer>false</organismsDiffer>
    <experiments>2</experiments>
</comment>
<comment type="interaction">
    <interactant intactId="EBI-16219">
        <id>P39940</id>
    </interactant>
    <interactant intactId="EBI-21381">
        <id>P38212</id>
        <label>RCR1</label>
    </interactant>
    <organismsDiffer>false</organismsDiffer>
    <experiments>3</experiments>
</comment>
<comment type="interaction">
    <interactant intactId="EBI-16219">
        <id>P39940</id>
    </interactant>
    <interactant intactId="EBI-18180">
        <id>Q03446</id>
        <label>RCR2</label>
    </interactant>
    <organismsDiffer>false</organismsDiffer>
    <experiments>2</experiments>
</comment>
<comment type="interaction">
    <interactant intactId="EBI-16219">
        <id>P39940</id>
    </interactant>
    <interactant intactId="EBI-15073">
        <id>Q00453</id>
        <label>RGM1</label>
    </interactant>
    <organismsDiffer>false</organismsDiffer>
    <experiments>2</experiments>
</comment>
<comment type="interaction">
    <interactant intactId="EBI-16219">
        <id>P39940</id>
    </interactant>
    <interactant intactId="EBI-15679">
        <id>Q02805</id>
        <label>ROD1</label>
    </interactant>
    <organismsDiffer>false</organismsDiffer>
    <experiments>3</experiments>
</comment>
<comment type="interaction">
    <interactant intactId="EBI-16219">
        <id>P39940</id>
    </interactant>
    <interactant intactId="EBI-22976">
        <id>P43602</id>
        <label>ROG3</label>
    </interactant>
    <organismsDiffer>false</organismsDiffer>
    <experiments>3</experiments>
</comment>
<comment type="interaction">
    <interactant intactId="EBI-16219">
        <id>P39940</id>
    </interactant>
    <interactant intactId="EBI-15794">
        <id>P20436</id>
        <label>RPB8</label>
    </interactant>
    <organismsDiffer>false</organismsDiffer>
    <experiments>3</experiments>
</comment>
<comment type="interaction">
    <interactant intactId="EBI-16219">
        <id>P39940</id>
    </interactant>
    <interactant intactId="EBI-26122">
        <id>P14359</id>
        <label>SNA3</label>
    </interactant>
    <organismsDiffer>false</organismsDiffer>
    <experiments>2</experiments>
</comment>
<comment type="interaction">
    <interactant intactId="EBI-16219">
        <id>P39940</id>
    </interactant>
    <interactant intactId="EBI-22078">
        <id>Q07549</id>
        <label>SNA4</label>
    </interactant>
    <organismsDiffer>false</organismsDiffer>
    <experiments>2</experiments>
</comment>
<comment type="interaction">
    <interactant intactId="EBI-16219">
        <id>P39940</id>
    </interactant>
    <interactant intactId="EBI-11238">
        <id>P39015</id>
        <label>STM1</label>
    </interactant>
    <organismsDiffer>false</organismsDiffer>
    <experiments>3</experiments>
</comment>
<comment type="interaction">
    <interactant intactId="EBI-16219">
        <id>P39940</id>
    </interactant>
    <interactant intactId="EBI-36080">
        <id>Q07748</id>
        <label>THI13</label>
    </interactant>
    <organismsDiffer>false</organismsDiffer>
    <experiments>2</experiments>
</comment>
<comment type="interaction">
    <interactant intactId="EBI-16219">
        <id>P39940</id>
    </interactant>
    <interactant intactId="EBI-30327">
        <id>Q08975</id>
        <label>THI21</label>
    </interactant>
    <organismsDiffer>false</organismsDiffer>
    <experiments>3</experiments>
</comment>
<comment type="interaction">
    <interactant intactId="EBI-16219">
        <id>P39940</id>
    </interactant>
    <interactant intactId="EBI-19221">
        <id>P43534</id>
        <label>THI5</label>
    </interactant>
    <organismsDiffer>false</organismsDiffer>
    <experiments>2</experiments>
</comment>
<comment type="interaction">
    <interactant intactId="EBI-16219">
        <id>P39940</id>
    </interactant>
    <interactant intactId="EBI-19291">
        <id>P23254</id>
        <label>TKL1</label>
    </interactant>
    <organismsDiffer>false</organismsDiffer>
    <experiments>2</experiments>
</comment>
<comment type="interaction">
    <interactant intactId="EBI-16219">
        <id>P39940</id>
    </interactant>
    <interactant intactId="EBI-31915">
        <id>Q08919</id>
        <label>TRE1</label>
    </interactant>
    <organismsDiffer>false</organismsDiffer>
    <experiments>3</experiments>
</comment>
<comment type="interaction">
    <interactant intactId="EBI-16219">
        <id>P39940</id>
    </interactant>
    <interactant intactId="EBI-36658">
        <id>Q12162</id>
        <label>TY1A-PL</label>
    </interactant>
    <organismsDiffer>false</organismsDiffer>
    <experiments>2</experiments>
</comment>
<comment type="interaction">
    <interactant intactId="EBI-16219">
        <id>P39940</id>
    </interactant>
    <interactant intactId="EBI-35737">
        <id>Q12472</id>
        <label>TY2B-DR1</label>
    </interactant>
    <organismsDiffer>false</organismsDiffer>
    <experiments>2</experiments>
</comment>
<comment type="interaction">
    <interactant intactId="EBI-16219">
        <id>P39940</id>
    </interactant>
    <interactant intactId="EBI-19745">
        <id>P33296</id>
        <label>UBC6</label>
    </interactant>
    <organismsDiffer>false</organismsDiffer>
    <experiments>2</experiments>
</comment>
<comment type="interaction">
    <interactant intactId="EBI-16219">
        <id>P39940</id>
    </interactant>
    <interactant intactId="EBI-21453">
        <id>P38081</id>
        <label>YBR056W</label>
    </interactant>
    <organismsDiffer>false</organismsDiffer>
    <experiments>3</experiments>
</comment>
<comment type="interaction">
    <interactant intactId="EBI-16219">
        <id>P39940</id>
    </interactant>
    <interactant intactId="EBI-21696">
        <id>P25561</id>
        <label>YCL021W</label>
    </interactant>
    <organismsDiffer>false</organismsDiffer>
    <experiments>3</experiments>
</comment>
<comment type="interaction">
    <interactant intactId="EBI-16219">
        <id>P39940</id>
    </interactant>
    <interactant intactId="EBI-24724">
        <id>P38835</id>
        <label>YHR131C</label>
    </interactant>
    <organismsDiffer>false</organismsDiffer>
    <experiments>3</experiments>
</comment>
<comment type="interaction">
    <interactant intactId="EBI-16219">
        <id>P39940</id>
    </interactant>
    <interactant intactId="EBI-24051">
        <id>P53108</id>
        <label>YIP5</label>
    </interactant>
    <organismsDiffer>false</organismsDiffer>
    <experiments>2</experiments>
</comment>
<comment type="interaction">
    <interactant intactId="EBI-16219">
        <id>P39940</id>
    </interactant>
    <interactant intactId="EBI-26263">
        <id>P40892</id>
        <label>YJL218W</label>
    </interactant>
    <organismsDiffer>false</organismsDiffer>
    <experiments>2</experiments>
</comment>
<comment type="interaction">
    <interactant intactId="EBI-16219">
        <id>P39940</id>
    </interactant>
    <interactant intactId="EBI-25572">
        <id>P47137</id>
        <label>YJR096W</label>
    </interactant>
    <organismsDiffer>false</organismsDiffer>
    <experiments>3</experiments>
</comment>
<comment type="interaction">
    <interactant intactId="EBI-16219">
        <id>P39940</id>
    </interactant>
    <interactant intactId="EBI-26441">
        <id>P36140</id>
        <label>YKR047W</label>
    </interactant>
    <organismsDiffer>false</organismsDiffer>
    <experiments>2</experiments>
</comment>
<comment type="subcellular location">
    <subcellularLocation>
        <location evidence="17">Cytoplasm</location>
    </subcellularLocation>
    <subcellularLocation>
        <location evidence="24">Nucleus</location>
    </subcellularLocation>
    <subcellularLocation>
        <location evidence="17">Cytoplasm</location>
        <location evidence="17">Cytoskeleton</location>
        <location evidence="17">Actin patch</location>
    </subcellularLocation>
</comment>
<comment type="PTM">
    <text>The ubiquitination appears to be the result of an intramolecular transfer of ubiquitin.</text>
</comment>
<comment type="miscellaneous">
    <text>A cysteine residue is required for ubiquitin-thioester formation.</text>
</comment>
<comment type="similarity">
    <text evidence="24">Belongs to the RSP5/NEDD4 family.</text>
</comment>
<feature type="chain" id="PRO_0000120335" description="E3 ubiquitin-protein ligase RSP5">
    <location>
        <begin position="1"/>
        <end position="809"/>
    </location>
</feature>
<feature type="domain" description="C2" evidence="1">
    <location>
        <begin position="1"/>
        <end position="105"/>
    </location>
</feature>
<feature type="domain" description="WW 1" evidence="3">
    <location>
        <begin position="229"/>
        <end position="262"/>
    </location>
</feature>
<feature type="domain" description="WW 2" evidence="3">
    <location>
        <begin position="331"/>
        <end position="364"/>
    </location>
</feature>
<feature type="domain" description="WW 3" evidence="3">
    <location>
        <begin position="387"/>
        <end position="420"/>
    </location>
</feature>
<feature type="domain" description="HECT" evidence="2">
    <location>
        <begin position="705"/>
        <end position="809"/>
    </location>
</feature>
<feature type="region of interest" description="Disordered" evidence="4">
    <location>
        <begin position="99"/>
        <end position="122"/>
    </location>
</feature>
<feature type="region of interest" description="Disordered" evidence="4">
    <location>
        <begin position="139"/>
        <end position="240"/>
    </location>
</feature>
<feature type="region of interest" description="Disordered" evidence="4">
    <location>
        <begin position="257"/>
        <end position="298"/>
    </location>
</feature>
<feature type="compositionally biased region" description="Basic and acidic residues" evidence="4">
    <location>
        <begin position="108"/>
        <end position="122"/>
    </location>
</feature>
<feature type="compositionally biased region" description="Polar residues" evidence="4">
    <location>
        <begin position="139"/>
        <end position="148"/>
    </location>
</feature>
<feature type="compositionally biased region" description="Low complexity" evidence="4">
    <location>
        <begin position="149"/>
        <end position="183"/>
    </location>
</feature>
<feature type="compositionally biased region" description="Polar residues" evidence="4">
    <location>
        <begin position="184"/>
        <end position="196"/>
    </location>
</feature>
<feature type="compositionally biased region" description="Low complexity" evidence="4">
    <location>
        <begin position="197"/>
        <end position="219"/>
    </location>
</feature>
<feature type="active site" description="Glycyl thioester intermediate">
    <location>
        <position position="777"/>
    </location>
</feature>
<feature type="cross-link" description="Glycyl lysine isopeptide (Lys-Gly) (interchain with G-Cter in ubiquitin)" evidence="27">
    <location>
        <position position="258"/>
    </location>
</feature>
<feature type="mutagenesis site" description="Has subtle defects on both initial ubiquitination and chain elongation of substrate proteins.">
    <original>Y</original>
    <variation>A</variation>
    <location>
        <position position="516"/>
    </location>
</feature>
<feature type="mutagenesis site" description="Has defects on both initial ubiquitination and chain elongation of substrate proteins.">
    <original>Y</original>
    <variation>A</variation>
    <location>
        <position position="521"/>
    </location>
</feature>
<feature type="mutagenesis site" description="Has defects on both initial ubiquitination and chain elongation of substrate proteins.">
    <original>I</original>
    <variation>D</variation>
    <location>
        <position position="537"/>
    </location>
</feature>
<feature type="mutagenesis site" description="Has defects on both initial ubiquitination and chain elongation of substrate proteins.">
    <original>F</original>
    <variation>D</variation>
    <location>
        <position position="618"/>
    </location>
</feature>
<feature type="mutagenesis site" description="In RSP5-1; impairs ubiquitin-thioester formation and catalysis of substrate ubiquitination." evidence="22">
    <original>L</original>
    <variation>S</variation>
    <location>
        <position position="733"/>
    </location>
</feature>
<feature type="mutagenesis site" description="Loss of ubiquitination." evidence="22">
    <original>C</original>
    <variation>A</variation>
    <location>
        <position position="777"/>
    </location>
</feature>
<feature type="strand" evidence="29">
    <location>
        <begin position="393"/>
        <end position="396"/>
    </location>
</feature>
<feature type="strand" evidence="28">
    <location>
        <begin position="405"/>
        <end position="407"/>
    </location>
</feature>
<feature type="turn" evidence="28">
    <location>
        <begin position="408"/>
        <end position="411"/>
    </location>
</feature>
<feature type="strand" evidence="28">
    <location>
        <begin position="412"/>
        <end position="416"/>
    </location>
</feature>
<feature type="helix" evidence="30">
    <location>
        <begin position="435"/>
        <end position="443"/>
    </location>
</feature>
<feature type="helix" evidence="30">
    <location>
        <begin position="446"/>
        <end position="448"/>
    </location>
</feature>
<feature type="strand" evidence="30">
    <location>
        <begin position="451"/>
        <end position="459"/>
    </location>
</feature>
<feature type="helix" evidence="30">
    <location>
        <begin position="461"/>
        <end position="463"/>
    </location>
</feature>
<feature type="helix" evidence="30">
    <location>
        <begin position="464"/>
        <end position="473"/>
    </location>
</feature>
<feature type="helix" evidence="30">
    <location>
        <begin position="479"/>
        <end position="481"/>
    </location>
</feature>
<feature type="strand" evidence="30">
    <location>
        <begin position="482"/>
        <end position="488"/>
    </location>
</feature>
<feature type="helix" evidence="30">
    <location>
        <begin position="496"/>
        <end position="511"/>
    </location>
</feature>
<feature type="helix" evidence="30">
    <location>
        <begin position="514"/>
        <end position="516"/>
    </location>
</feature>
<feature type="strand" evidence="30">
    <location>
        <begin position="517"/>
        <end position="521"/>
    </location>
</feature>
<feature type="strand" evidence="30">
    <location>
        <begin position="526"/>
        <end position="531"/>
    </location>
</feature>
<feature type="helix" evidence="30">
    <location>
        <begin position="535"/>
        <end position="537"/>
    </location>
</feature>
<feature type="helix" evidence="30">
    <location>
        <begin position="541"/>
        <end position="557"/>
    </location>
</feature>
<feature type="helix" evidence="30">
    <location>
        <begin position="568"/>
        <end position="574"/>
    </location>
</feature>
<feature type="helix" evidence="30">
    <location>
        <begin position="581"/>
        <end position="586"/>
    </location>
</feature>
<feature type="helix" evidence="30">
    <location>
        <begin position="589"/>
        <end position="600"/>
    </location>
</feature>
<feature type="turn" evidence="30">
    <location>
        <begin position="604"/>
        <end position="606"/>
    </location>
</feature>
<feature type="strand" evidence="30">
    <location>
        <begin position="610"/>
        <end position="617"/>
    </location>
</feature>
<feature type="strand" evidence="30">
    <location>
        <begin position="620"/>
        <end position="627"/>
    </location>
</feature>
<feature type="helix" evidence="30">
    <location>
        <begin position="630"/>
        <end position="632"/>
    </location>
</feature>
<feature type="strand" evidence="29">
    <location>
        <begin position="633"/>
        <end position="635"/>
    </location>
</feature>
<feature type="turn" evidence="30">
    <location>
        <begin position="637"/>
        <end position="639"/>
    </location>
</feature>
<feature type="helix" evidence="30">
    <location>
        <begin position="640"/>
        <end position="652"/>
    </location>
</feature>
<feature type="turn" evidence="30">
    <location>
        <begin position="653"/>
        <end position="656"/>
    </location>
</feature>
<feature type="helix" evidence="30">
    <location>
        <begin position="657"/>
        <end position="668"/>
    </location>
</feature>
<feature type="helix" evidence="30">
    <location>
        <begin position="673"/>
        <end position="676"/>
    </location>
</feature>
<feature type="helix" evidence="30">
    <location>
        <begin position="681"/>
        <end position="689"/>
    </location>
</feature>
<feature type="helix" evidence="30">
    <location>
        <begin position="696"/>
        <end position="701"/>
    </location>
</feature>
<feature type="strand" evidence="30">
    <location>
        <begin position="703"/>
        <end position="708"/>
    </location>
</feature>
<feature type="helix" evidence="30">
    <location>
        <begin position="713"/>
        <end position="724"/>
    </location>
</feature>
<feature type="helix" evidence="30">
    <location>
        <begin position="727"/>
        <end position="738"/>
    </location>
</feature>
<feature type="helix" evidence="30">
    <location>
        <begin position="748"/>
        <end position="750"/>
    </location>
</feature>
<feature type="strand" evidence="29">
    <location>
        <begin position="754"/>
        <end position="757"/>
    </location>
</feature>
<feature type="strand" evidence="30">
    <location>
        <begin position="760"/>
        <end position="763"/>
    </location>
</feature>
<feature type="strand" evidence="30">
    <location>
        <begin position="773"/>
        <end position="775"/>
    </location>
</feature>
<feature type="turn" evidence="30">
    <location>
        <begin position="776"/>
        <end position="779"/>
    </location>
</feature>
<feature type="strand" evidence="30">
    <location>
        <begin position="780"/>
        <end position="782"/>
    </location>
</feature>
<feature type="helix" evidence="30">
    <location>
        <begin position="789"/>
        <end position="801"/>
    </location>
</feature>
<proteinExistence type="evidence at protein level"/>
<dbReference type="EC" id="2.3.2.26" evidence="25 26"/>
<dbReference type="EMBL" id="U18916">
    <property type="protein sequence ID" value="AAC03223.1"/>
    <property type="molecule type" value="Genomic_DNA"/>
</dbReference>
<dbReference type="EMBL" id="BK006939">
    <property type="protein sequence ID" value="DAA07785.1"/>
    <property type="molecule type" value="Genomic_DNA"/>
</dbReference>
<dbReference type="PIR" id="S43217">
    <property type="entry name" value="S43217"/>
</dbReference>
<dbReference type="RefSeq" id="NP_011051.3">
    <property type="nucleotide sequence ID" value="NM_001179015.3"/>
</dbReference>
<dbReference type="PDB" id="3OLM">
    <property type="method" value="X-ray"/>
    <property type="resolution" value="2.50 A"/>
    <property type="chains" value="A=384-809"/>
</dbReference>
<dbReference type="PDB" id="4LCD">
    <property type="method" value="X-ray"/>
    <property type="resolution" value="3.10 A"/>
    <property type="chains" value="A/B=383-809"/>
</dbReference>
<dbReference type="PDB" id="5HPL">
    <property type="method" value="X-ray"/>
    <property type="resolution" value="2.31 A"/>
    <property type="chains" value="A/B=430-809"/>
</dbReference>
<dbReference type="PDBsum" id="3OLM"/>
<dbReference type="PDBsum" id="4LCD"/>
<dbReference type="PDBsum" id="5HPL"/>
<dbReference type="SMR" id="P39940"/>
<dbReference type="BioGRID" id="36869">
    <property type="interactions" value="1273"/>
</dbReference>
<dbReference type="ComplexPortal" id="CPX-2921">
    <property type="entry name" value="RSP5-BUL1 ubiquitin ligase complex"/>
</dbReference>
<dbReference type="ComplexPortal" id="CPX-2923">
    <property type="entry name" value="RSP5-BUL2 ubiquitin ligase complex"/>
</dbReference>
<dbReference type="DIP" id="DIP-2238N"/>
<dbReference type="ELM" id="P39940"/>
<dbReference type="FunCoup" id="P39940">
    <property type="interactions" value="873"/>
</dbReference>
<dbReference type="IntAct" id="P39940">
    <property type="interactions" value="189"/>
</dbReference>
<dbReference type="MINT" id="P39940"/>
<dbReference type="STRING" id="4932.YER125W"/>
<dbReference type="TCDB" id="3.A.31.1.1">
    <property type="family name" value="the endosomal sorting complexes required for transport iii (escrt-iii) family"/>
</dbReference>
<dbReference type="TCDB" id="8.A.30.1.4">
    <property type="family name" value="the nedd4-family interacting protein-2 (nedd4) family"/>
</dbReference>
<dbReference type="GlyGen" id="P39940">
    <property type="glycosylation" value="3 sites, 1 O-linked glycan (3 sites)"/>
</dbReference>
<dbReference type="iPTMnet" id="P39940"/>
<dbReference type="PaxDb" id="4932-YER125W"/>
<dbReference type="PeptideAtlas" id="P39940"/>
<dbReference type="EnsemblFungi" id="YER125W_mRNA">
    <property type="protein sequence ID" value="YER125W"/>
    <property type="gene ID" value="YER125W"/>
</dbReference>
<dbReference type="GeneID" id="856862"/>
<dbReference type="KEGG" id="sce:YER125W"/>
<dbReference type="AGR" id="SGD:S000000927"/>
<dbReference type="SGD" id="S000000927">
    <property type="gene designation" value="RSP5"/>
</dbReference>
<dbReference type="VEuPathDB" id="FungiDB:YER125W"/>
<dbReference type="eggNOG" id="KOG0940">
    <property type="taxonomic scope" value="Eukaryota"/>
</dbReference>
<dbReference type="HOGENOM" id="CLU_002173_0_0_1"/>
<dbReference type="InParanoid" id="P39940"/>
<dbReference type="OMA" id="WKRPTLD"/>
<dbReference type="OrthoDB" id="8068875at2759"/>
<dbReference type="BioCyc" id="YEAST:G3O-30288-MONOMER"/>
<dbReference type="BRENDA" id="2.3.2.26">
    <property type="organism ID" value="984"/>
</dbReference>
<dbReference type="Reactome" id="R-SCE-8948751">
    <property type="pathway name" value="Regulation of PTEN stability and activity"/>
</dbReference>
<dbReference type="Reactome" id="R-SCE-9013406">
    <property type="pathway name" value="RHOQ GTPase cycle"/>
</dbReference>
<dbReference type="Reactome" id="R-SCE-9013420">
    <property type="pathway name" value="RHOU GTPase cycle"/>
</dbReference>
<dbReference type="Reactome" id="R-SCE-983168">
    <property type="pathway name" value="Antigen processing: Ubiquitination &amp; Proteasome degradation"/>
</dbReference>
<dbReference type="UniPathway" id="UPA00143"/>
<dbReference type="BioGRID-ORCS" id="856862">
    <property type="hits" value="7 hits in 10 CRISPR screens"/>
</dbReference>
<dbReference type="EvolutionaryTrace" id="P39940"/>
<dbReference type="PRO" id="PR:P39940"/>
<dbReference type="Proteomes" id="UP000002311">
    <property type="component" value="Chromosome V"/>
</dbReference>
<dbReference type="RNAct" id="P39940">
    <property type="molecule type" value="protein"/>
</dbReference>
<dbReference type="GO" id="GO:0030479">
    <property type="term" value="C:actin cortical patch"/>
    <property type="evidence" value="ECO:0007669"/>
    <property type="project" value="UniProtKB-SubCell"/>
</dbReference>
<dbReference type="GO" id="GO:0005934">
    <property type="term" value="C:cellular bud tip"/>
    <property type="evidence" value="ECO:0000314"/>
    <property type="project" value="SGD"/>
</dbReference>
<dbReference type="GO" id="GO:0005737">
    <property type="term" value="C:cytoplasm"/>
    <property type="evidence" value="ECO:0000314"/>
    <property type="project" value="SGD"/>
</dbReference>
<dbReference type="GO" id="GO:0005829">
    <property type="term" value="C:cytosol"/>
    <property type="evidence" value="ECO:0000315"/>
    <property type="project" value="SGD"/>
</dbReference>
<dbReference type="GO" id="GO:0022626">
    <property type="term" value="C:cytosolic ribosome"/>
    <property type="evidence" value="ECO:0000314"/>
    <property type="project" value="UniProt"/>
</dbReference>
<dbReference type="GO" id="GO:0010008">
    <property type="term" value="C:endosome membrane"/>
    <property type="evidence" value="ECO:0000314"/>
    <property type="project" value="SGD"/>
</dbReference>
<dbReference type="GO" id="GO:0005794">
    <property type="term" value="C:Golgi apparatus"/>
    <property type="evidence" value="ECO:0000314"/>
    <property type="project" value="SGD"/>
</dbReference>
<dbReference type="GO" id="GO:0005739">
    <property type="term" value="C:mitochondrion"/>
    <property type="evidence" value="ECO:0007005"/>
    <property type="project" value="SGD"/>
</dbReference>
<dbReference type="GO" id="GO:0005634">
    <property type="term" value="C:nucleus"/>
    <property type="evidence" value="ECO:0000314"/>
    <property type="project" value="SGD"/>
</dbReference>
<dbReference type="GO" id="GO:0005886">
    <property type="term" value="C:plasma membrane"/>
    <property type="evidence" value="ECO:0007005"/>
    <property type="project" value="SGD"/>
</dbReference>
<dbReference type="GO" id="GO:1990306">
    <property type="term" value="C:RSP5-BUL ubiquitin ligase complex"/>
    <property type="evidence" value="ECO:0000353"/>
    <property type="project" value="ComplexPortal"/>
</dbReference>
<dbReference type="GO" id="GO:0000151">
    <property type="term" value="C:ubiquitin ligase complex"/>
    <property type="evidence" value="ECO:0000314"/>
    <property type="project" value="MGI"/>
</dbReference>
<dbReference type="GO" id="GO:0035091">
    <property type="term" value="F:phosphatidylinositol binding"/>
    <property type="evidence" value="ECO:0000314"/>
    <property type="project" value="SGD"/>
</dbReference>
<dbReference type="GO" id="GO:0043130">
    <property type="term" value="F:ubiquitin binding"/>
    <property type="evidence" value="ECO:0000314"/>
    <property type="project" value="SGD"/>
</dbReference>
<dbReference type="GO" id="GO:0061630">
    <property type="term" value="F:ubiquitin protein ligase activity"/>
    <property type="evidence" value="ECO:0000314"/>
    <property type="project" value="UniProtKB"/>
</dbReference>
<dbReference type="GO" id="GO:0004842">
    <property type="term" value="F:ubiquitin-protein transferase activity"/>
    <property type="evidence" value="ECO:0000314"/>
    <property type="project" value="SGD"/>
</dbReference>
<dbReference type="GO" id="GO:0034450">
    <property type="term" value="F:ubiquitin-ubiquitin ligase activity"/>
    <property type="evidence" value="ECO:0000314"/>
    <property type="project" value="SGD"/>
</dbReference>
<dbReference type="GO" id="GO:0071230">
    <property type="term" value="P:cellular response to amino acid stimulus"/>
    <property type="evidence" value="ECO:0000315"/>
    <property type="project" value="SGD"/>
</dbReference>
<dbReference type="GO" id="GO:0034605">
    <property type="term" value="P:cellular response to heat"/>
    <property type="evidence" value="ECO:0000315"/>
    <property type="project" value="SGD"/>
</dbReference>
<dbReference type="GO" id="GO:1903577">
    <property type="term" value="P:cellular response to L-arginine"/>
    <property type="evidence" value="ECO:0000315"/>
    <property type="project" value="SGD"/>
</dbReference>
<dbReference type="GO" id="GO:0033554">
    <property type="term" value="P:cellular response to stress"/>
    <property type="evidence" value="ECO:0000315"/>
    <property type="project" value="SGD"/>
</dbReference>
<dbReference type="GO" id="GO:0006325">
    <property type="term" value="P:chromatin organization"/>
    <property type="evidence" value="ECO:0000315"/>
    <property type="project" value="SGD"/>
</dbReference>
<dbReference type="GO" id="GO:0010994">
    <property type="term" value="P:free ubiquitin chain polymerization"/>
    <property type="evidence" value="ECO:0000314"/>
    <property type="project" value="SGD"/>
</dbReference>
<dbReference type="GO" id="GO:0032511">
    <property type="term" value="P:late endosome to vacuole transport via multivesicular body sorting pathway"/>
    <property type="evidence" value="ECO:0000315"/>
    <property type="project" value="SGD"/>
</dbReference>
<dbReference type="GO" id="GO:0072671">
    <property type="term" value="P:mitochondria-associated ubiquitin-dependent protein catabolic process"/>
    <property type="evidence" value="ECO:0000315"/>
    <property type="project" value="SGD"/>
</dbReference>
<dbReference type="GO" id="GO:0007005">
    <property type="term" value="P:mitochondrion organization"/>
    <property type="evidence" value="ECO:0000315"/>
    <property type="project" value="SGD"/>
</dbReference>
<dbReference type="GO" id="GO:0070651">
    <property type="term" value="P:nonfunctional rRNA decay"/>
    <property type="evidence" value="ECO:0000314"/>
    <property type="project" value="UniProt"/>
</dbReference>
<dbReference type="GO" id="GO:0016973">
    <property type="term" value="P:poly(A)+ mRNA export from nucleus"/>
    <property type="evidence" value="ECO:0000315"/>
    <property type="project" value="SGD"/>
</dbReference>
<dbReference type="GO" id="GO:0045807">
    <property type="term" value="P:positive regulation of endocytosis"/>
    <property type="evidence" value="ECO:0000315"/>
    <property type="project" value="SGD"/>
</dbReference>
<dbReference type="GO" id="GO:0045723">
    <property type="term" value="P:positive regulation of fatty acid biosynthetic process"/>
    <property type="evidence" value="ECO:0000315"/>
    <property type="project" value="SGD"/>
</dbReference>
<dbReference type="GO" id="GO:0032436">
    <property type="term" value="P:positive regulation of proteasomal ubiquitin-dependent protein catabolic process"/>
    <property type="evidence" value="ECO:0000315"/>
    <property type="project" value="SGD"/>
</dbReference>
<dbReference type="GO" id="GO:0048260">
    <property type="term" value="P:positive regulation of receptor-mediated endocytosis"/>
    <property type="evidence" value="ECO:0000315"/>
    <property type="project" value="SGD"/>
</dbReference>
<dbReference type="GO" id="GO:0045944">
    <property type="term" value="P:positive regulation of transcription by RNA polymerase II"/>
    <property type="evidence" value="ECO:0000315"/>
    <property type="project" value="SGD"/>
</dbReference>
<dbReference type="GO" id="GO:2000397">
    <property type="term" value="P:positive regulation of ubiquitin-dependent endocytosis"/>
    <property type="evidence" value="ECO:0000303"/>
    <property type="project" value="ComplexPortal"/>
</dbReference>
<dbReference type="GO" id="GO:0043161">
    <property type="term" value="P:proteasome-mediated ubiquitin-dependent protein catabolic process"/>
    <property type="evidence" value="ECO:0000353"/>
    <property type="project" value="SGD"/>
</dbReference>
<dbReference type="GO" id="GO:0070534">
    <property type="term" value="P:protein K63-linked ubiquitination"/>
    <property type="evidence" value="ECO:0000314"/>
    <property type="project" value="UniProtKB"/>
</dbReference>
<dbReference type="GO" id="GO:0006515">
    <property type="term" value="P:protein quality control for misfolded or incompletely synthesized proteins"/>
    <property type="evidence" value="ECO:0000314"/>
    <property type="project" value="SGD"/>
</dbReference>
<dbReference type="GO" id="GO:0043328">
    <property type="term" value="P:protein transport to vacuole involved in ubiquitin-dependent protein catabolic process via the multivesicular body sorting pathway"/>
    <property type="evidence" value="ECO:0000315"/>
    <property type="project" value="SGD"/>
</dbReference>
<dbReference type="GO" id="GO:0016567">
    <property type="term" value="P:protein ubiquitination"/>
    <property type="evidence" value="ECO:0000314"/>
    <property type="project" value="SGD"/>
</dbReference>
<dbReference type="GO" id="GO:0032956">
    <property type="term" value="P:regulation of actin cytoskeleton organization"/>
    <property type="evidence" value="ECO:0000316"/>
    <property type="project" value="SGD"/>
</dbReference>
<dbReference type="GO" id="GO:0010794">
    <property type="term" value="P:regulation of dolichol biosynthetic process"/>
    <property type="evidence" value="ECO:0000315"/>
    <property type="project" value="SGD"/>
</dbReference>
<dbReference type="GO" id="GO:0032443">
    <property type="term" value="P:regulation of ergosterol biosynthetic process"/>
    <property type="evidence" value="ECO:0000315"/>
    <property type="project" value="SGD"/>
</dbReference>
<dbReference type="GO" id="GO:0010793">
    <property type="term" value="P:regulation of mRNA export from nucleus"/>
    <property type="evidence" value="ECO:0000315"/>
    <property type="project" value="SGD"/>
</dbReference>
<dbReference type="GO" id="GO:0006808">
    <property type="term" value="P:regulation of nitrogen utilization"/>
    <property type="evidence" value="ECO:0000316"/>
    <property type="project" value="SGD"/>
</dbReference>
<dbReference type="GO" id="GO:0019220">
    <property type="term" value="P:regulation of phosphate metabolic process"/>
    <property type="evidence" value="ECO:0000316"/>
    <property type="project" value="SGD"/>
</dbReference>
<dbReference type="GO" id="GO:0032880">
    <property type="term" value="P:regulation of protein localization"/>
    <property type="evidence" value="ECO:0000315"/>
    <property type="project" value="SGD"/>
</dbReference>
<dbReference type="GO" id="GO:2000203">
    <property type="term" value="P:regulation of ribosomal large subunit export from nucleus"/>
    <property type="evidence" value="ECO:0000315"/>
    <property type="project" value="SGD"/>
</dbReference>
<dbReference type="GO" id="GO:2000232">
    <property type="term" value="P:regulation of rRNA processing"/>
    <property type="evidence" value="ECO:0000315"/>
    <property type="project" value="SGD"/>
</dbReference>
<dbReference type="GO" id="GO:2000238">
    <property type="term" value="P:regulation of tRNA export from nucleus"/>
    <property type="evidence" value="ECO:0000315"/>
    <property type="project" value="SGD"/>
</dbReference>
<dbReference type="GO" id="GO:2000235">
    <property type="term" value="P:regulation of tRNA processing"/>
    <property type="evidence" value="ECO:0000315"/>
    <property type="project" value="SGD"/>
</dbReference>
<dbReference type="GO" id="GO:0010795">
    <property type="term" value="P:regulation of ubiquinone biosynthetic process"/>
    <property type="evidence" value="ECO:0000315"/>
    <property type="project" value="SGD"/>
</dbReference>
<dbReference type="GO" id="GO:0034517">
    <property type="term" value="P:ribophagy"/>
    <property type="evidence" value="ECO:0000316"/>
    <property type="project" value="SGD"/>
</dbReference>
<dbReference type="GO" id="GO:0070086">
    <property type="term" value="P:ubiquitin-dependent endocytosis"/>
    <property type="evidence" value="ECO:0000315"/>
    <property type="project" value="SGD"/>
</dbReference>
<dbReference type="GO" id="GO:0006511">
    <property type="term" value="P:ubiquitin-dependent protein catabolic process"/>
    <property type="evidence" value="ECO:0000314"/>
    <property type="project" value="MGI"/>
</dbReference>
<dbReference type="GO" id="GO:0043162">
    <property type="term" value="P:ubiquitin-dependent protein catabolic process via the multivesicular body sorting pathway"/>
    <property type="evidence" value="ECO:0000315"/>
    <property type="project" value="SGD"/>
</dbReference>
<dbReference type="CDD" id="cd00078">
    <property type="entry name" value="HECTc"/>
    <property type="match status" value="1"/>
</dbReference>
<dbReference type="CDD" id="cd00201">
    <property type="entry name" value="WW"/>
    <property type="match status" value="3"/>
</dbReference>
<dbReference type="FunFam" id="2.20.70.10:FF:000011">
    <property type="entry name" value="E3 ubiquitin-protein ligase"/>
    <property type="match status" value="1"/>
</dbReference>
<dbReference type="FunFam" id="2.20.70.10:FF:000017">
    <property type="entry name" value="E3 ubiquitin-protein ligase"/>
    <property type="match status" value="1"/>
</dbReference>
<dbReference type="FunFam" id="2.20.70.10:FF:000053">
    <property type="entry name" value="E3 ubiquitin-protein ligase"/>
    <property type="match status" value="1"/>
</dbReference>
<dbReference type="FunFam" id="2.60.40.150:FF:000156">
    <property type="entry name" value="E3 ubiquitin-protein ligase"/>
    <property type="match status" value="1"/>
</dbReference>
<dbReference type="FunFam" id="3.90.1750.10:FF:000005">
    <property type="entry name" value="E3 ubiquitin-protein ligase"/>
    <property type="match status" value="1"/>
</dbReference>
<dbReference type="FunFam" id="3.30.2160.10:FF:000001">
    <property type="entry name" value="E3 ubiquitin-protein ligase NEDD4-like"/>
    <property type="match status" value="1"/>
</dbReference>
<dbReference type="FunFam" id="3.30.2410.10:FF:000001">
    <property type="entry name" value="E3 ubiquitin-protein ligase NEDD4-like"/>
    <property type="match status" value="1"/>
</dbReference>
<dbReference type="Gene3D" id="2.20.70.10">
    <property type="match status" value="2"/>
</dbReference>
<dbReference type="Gene3D" id="2.60.40.150">
    <property type="entry name" value="C2 domain"/>
    <property type="match status" value="1"/>
</dbReference>
<dbReference type="Gene3D" id="3.30.2160.10">
    <property type="entry name" value="Hect, E3 ligase catalytic domain"/>
    <property type="match status" value="1"/>
</dbReference>
<dbReference type="Gene3D" id="3.30.2410.10">
    <property type="entry name" value="Hect, E3 ligase catalytic domain"/>
    <property type="match status" value="1"/>
</dbReference>
<dbReference type="Gene3D" id="3.90.1750.10">
    <property type="entry name" value="Hect, E3 ligase catalytic domains"/>
    <property type="match status" value="1"/>
</dbReference>
<dbReference type="InterPro" id="IPR000008">
    <property type="entry name" value="C2_dom"/>
</dbReference>
<dbReference type="InterPro" id="IPR035892">
    <property type="entry name" value="C2_domain_sf"/>
</dbReference>
<dbReference type="InterPro" id="IPR024928">
    <property type="entry name" value="E3_ub_ligase_SMURF1"/>
</dbReference>
<dbReference type="InterPro" id="IPR050409">
    <property type="entry name" value="E3_ubiq-protein_ligase"/>
</dbReference>
<dbReference type="InterPro" id="IPR000569">
    <property type="entry name" value="HECT_dom"/>
</dbReference>
<dbReference type="InterPro" id="IPR035983">
    <property type="entry name" value="Hect_E3_ubiquitin_ligase"/>
</dbReference>
<dbReference type="InterPro" id="IPR001202">
    <property type="entry name" value="WW_dom"/>
</dbReference>
<dbReference type="InterPro" id="IPR036020">
    <property type="entry name" value="WW_dom_sf"/>
</dbReference>
<dbReference type="PANTHER" id="PTHR11254:SF440">
    <property type="entry name" value="E3 UBIQUITIN-PROTEIN LIGASE NEDD-4"/>
    <property type="match status" value="1"/>
</dbReference>
<dbReference type="PANTHER" id="PTHR11254">
    <property type="entry name" value="HECT DOMAIN UBIQUITIN-PROTEIN LIGASE"/>
    <property type="match status" value="1"/>
</dbReference>
<dbReference type="Pfam" id="PF00168">
    <property type="entry name" value="C2"/>
    <property type="match status" value="1"/>
</dbReference>
<dbReference type="Pfam" id="PF00632">
    <property type="entry name" value="HECT"/>
    <property type="match status" value="1"/>
</dbReference>
<dbReference type="Pfam" id="PF00397">
    <property type="entry name" value="WW"/>
    <property type="match status" value="3"/>
</dbReference>
<dbReference type="PIRSF" id="PIRSF001569">
    <property type="entry name" value="E3_ub_ligase_SMURF1"/>
    <property type="match status" value="1"/>
</dbReference>
<dbReference type="SMART" id="SM00239">
    <property type="entry name" value="C2"/>
    <property type="match status" value="1"/>
</dbReference>
<dbReference type="SMART" id="SM00119">
    <property type="entry name" value="HECTc"/>
    <property type="match status" value="1"/>
</dbReference>
<dbReference type="SMART" id="SM00456">
    <property type="entry name" value="WW"/>
    <property type="match status" value="3"/>
</dbReference>
<dbReference type="SUPFAM" id="SSF49562">
    <property type="entry name" value="C2 domain (Calcium/lipid-binding domain, CaLB)"/>
    <property type="match status" value="1"/>
</dbReference>
<dbReference type="SUPFAM" id="SSF56204">
    <property type="entry name" value="Hect, E3 ligase catalytic domain"/>
    <property type="match status" value="1"/>
</dbReference>
<dbReference type="SUPFAM" id="SSF51045">
    <property type="entry name" value="WW domain"/>
    <property type="match status" value="3"/>
</dbReference>
<dbReference type="PROSITE" id="PS50004">
    <property type="entry name" value="C2"/>
    <property type="match status" value="1"/>
</dbReference>
<dbReference type="PROSITE" id="PS50237">
    <property type="entry name" value="HECT"/>
    <property type="match status" value="1"/>
</dbReference>
<dbReference type="PROSITE" id="PS01159">
    <property type="entry name" value="WW_DOMAIN_1"/>
    <property type="match status" value="3"/>
</dbReference>
<dbReference type="PROSITE" id="PS50020">
    <property type="entry name" value="WW_DOMAIN_2"/>
    <property type="match status" value="3"/>
</dbReference>
<sequence length="809" mass="91816">MPSSISVKLVAAESLYKRDVFRSPDPFAVLTIDGYQTKSTSAAKKTLNPYWNETFKFDDINENSILTIQVFDQKKFKKKDQGFLGVVNVRVGDVLGHLDEDTATSSGRPREETITRDLKKSNDGMAVSGRLIVVLSKLPSSSPHSQAPSGHTASSSTNTSSTTRTNGHSTSSTRNHSTSHPSRGTAQAVESTLQSGTTAATNTATTSHRSTNSTSSATRQYSSFEDQYGRLPPGWERRTDNFGRTYYVDHNTRTTTWKRPTLDQTEAERGNQLNANTELERRQHRGRTLPGGSSDNSSVTVQVGGGSNIPPVNGAAAAAFAATGGTTSGLGELPSGWEQRFTPEGRAYFVDHNTRTTTWVDPRRQQYIRTYGPTNTTIQQQPVSQLGPLPSGWEMRLTNTARVYFVDHNTKTTTWDDPRLPSSLDQNVPQYKRDFRRKVIYFRSQPALRILPGQCHIKVRRKNIFEDAYQEIMRQTPEDLKKRLMIKFDGEEGLDYGGVSREFFFLLSHEMFNPFYCLFEYSAYDNYTIQINPNSGINPEHLNYFKFIGRVVGLGVFHRRFLDAFFVGALYKMMLRKKVVLQDMEGVDAEVYNSLNWMLENSIDGVLDLTFSADDERFGEVVTVDLKPDGRNIEVTDGNKKEYVELYTQWRIVDRVQEQFKAFMDGFNELIPEDLVTVFDERELELLIGGIAEIDIEDWKKHTDYRGYQESDEVIQWFWKCVSEWDNEQRARLLQFTTGTSRIPVNGFKDLQGSDGPRRFTIEKAGEVQQLPKSHTCFNRVDLPQYVDYDSMKQKLTLAVEETIGFGQE</sequence>
<name>RSP5_YEAST</name>
<reference key="1">
    <citation type="journal article" date="1997" name="Nature">
        <title>The nucleotide sequence of Saccharomyces cerevisiae chromosome V.</title>
        <authorList>
            <person name="Dietrich F.S."/>
            <person name="Mulligan J.T."/>
            <person name="Hennessy K.M."/>
            <person name="Yelton M.A."/>
            <person name="Allen E."/>
            <person name="Araujo R."/>
            <person name="Aviles E."/>
            <person name="Berno A."/>
            <person name="Brennan T."/>
            <person name="Carpenter J."/>
            <person name="Chen E."/>
            <person name="Cherry J.M."/>
            <person name="Chung E."/>
            <person name="Duncan M."/>
            <person name="Guzman E."/>
            <person name="Hartzell G."/>
            <person name="Hunicke-Smith S."/>
            <person name="Hyman R.W."/>
            <person name="Kayser A."/>
            <person name="Komp C."/>
            <person name="Lashkari D."/>
            <person name="Lew H."/>
            <person name="Lin D."/>
            <person name="Mosedale D."/>
            <person name="Nakahara K."/>
            <person name="Namath A."/>
            <person name="Norgren R."/>
            <person name="Oefner P."/>
            <person name="Oh C."/>
            <person name="Petel F.X."/>
            <person name="Roberts D."/>
            <person name="Sehl P."/>
            <person name="Schramm S."/>
            <person name="Shogren T."/>
            <person name="Smith V."/>
            <person name="Taylor P."/>
            <person name="Wei Y."/>
            <person name="Botstein D."/>
            <person name="Davis R.W."/>
        </authorList>
    </citation>
    <scope>NUCLEOTIDE SEQUENCE [LARGE SCALE GENOMIC DNA]</scope>
    <source>
        <strain>ATCC 204508 / S288c</strain>
    </source>
</reference>
<reference key="2">
    <citation type="journal article" date="2014" name="G3 (Bethesda)">
        <title>The reference genome sequence of Saccharomyces cerevisiae: Then and now.</title>
        <authorList>
            <person name="Engel S.R."/>
            <person name="Dietrich F.S."/>
            <person name="Fisk D.G."/>
            <person name="Binkley G."/>
            <person name="Balakrishnan R."/>
            <person name="Costanzo M.C."/>
            <person name="Dwight S.S."/>
            <person name="Hitz B.C."/>
            <person name="Karra K."/>
            <person name="Nash R.S."/>
            <person name="Weng S."/>
            <person name="Wong E.D."/>
            <person name="Lloyd P."/>
            <person name="Skrzypek M.S."/>
            <person name="Miyasato S.R."/>
            <person name="Simison M."/>
            <person name="Cherry J.M."/>
        </authorList>
    </citation>
    <scope>GENOME REANNOTATION</scope>
    <source>
        <strain>ATCC 204508 / S288c</strain>
    </source>
</reference>
<reference key="3">
    <citation type="unpublished observations" date="1993-02">
        <authorList>
            <person name="Winston F."/>
        </authorList>
    </citation>
    <scope>IDENTIFICATION</scope>
</reference>
<reference key="4">
    <citation type="journal article" date="1995" name="Mol. Microbiol.">
        <title>NPI1, an essential yeast gene involved in induced degradation of Gap1 and Fur4 permeases, encodes the Rsp5 ubiquitin-protein ligase.</title>
        <authorList>
            <person name="Hein C."/>
            <person name="Springael J.-Y."/>
            <person name="Volland C."/>
            <person name="Haguenauer-Tsapis R."/>
            <person name="Andre B."/>
        </authorList>
    </citation>
    <scope>FUNCTION</scope>
    <source>
        <strain>Sigma 1278B</strain>
    </source>
</reference>
<reference key="5">
    <citation type="journal article" date="1995" name="Proc. Natl. Acad. Sci. U.S.A.">
        <title>A family of proteins structurally and functionally related to the E6-AP ubiquitin-protein ligase.</title>
        <authorList>
            <person name="Huibregtse J.M."/>
            <person name="Scheffner M."/>
            <person name="Beaudenon S."/>
            <person name="Howley P.M."/>
        </authorList>
    </citation>
    <scope>FUNCTION</scope>
</reference>
<reference key="6">
    <citation type="journal article" date="1995" name="Proc. Natl. Acad. Sci. U.S.A.">
        <authorList>
            <person name="Huibregtse J.M."/>
            <person name="Scheffner M."/>
            <person name="Beaudenon S."/>
            <person name="Howley P.M."/>
        </authorList>
    </citation>
    <scope>ERRATUM OF PUBMED:7708685</scope>
</reference>
<reference key="7">
    <citation type="journal article" date="1996" name="Mol. Cell. Biol.">
        <title>Bul1, a new protein that binds to the Rsp5 ubiquitin ligase in Saccharomyces cerevisiae.</title>
        <authorList>
            <person name="Yashiroda H."/>
            <person name="Oguchi T."/>
            <person name="Yasuda Y."/>
            <person name="Toh-e A."/>
            <person name="Kikuchi Y."/>
        </authorList>
    </citation>
    <scope>INTERACTION WITH BUL1</scope>
</reference>
<reference key="8">
    <citation type="journal article" date="1998" name="Gene">
        <title>The PY-motif of Bul1 protein is essential for growth of Saccharomyces cerevisiae under various stress conditions.</title>
        <authorList>
            <person name="Yashiroda H."/>
            <person name="Kaida D."/>
            <person name="Toh-e A."/>
            <person name="Kikuchi Y."/>
        </authorList>
    </citation>
    <scope>FUNCTION</scope>
    <scope>INTERACTION WITH BUL1 AND BUL2</scope>
</reference>
<reference key="9">
    <citation type="journal article" date="1999" name="Mol. Cell. Biol.">
        <title>Functional domains of the rsp5 ubiquitin-protein ligase.</title>
        <authorList>
            <person name="Wang G."/>
            <person name="Yang J."/>
            <person name="Huibregtse J.M."/>
        </authorList>
    </citation>
    <scope>FUNCTION</scope>
    <scope>MUTAGENESIS OF LEU-733 AND CYS-777</scope>
    <source>
        <strain>S288c / FY56</strain>
    </source>
</reference>
<reference key="10">
    <citation type="journal article" date="2002" name="FEBS Lett.">
        <title>PY motifs of Rod1 are required for binding to Rsp5 and for drug resistance.</title>
        <authorList>
            <person name="Andoh T."/>
            <person name="Hirata Y."/>
            <person name="Kikuchi A."/>
        </authorList>
    </citation>
    <scope>FUNCTION</scope>
    <scope>INTERACTION WITH ROD1 AND ROG3</scope>
</reference>
<reference key="11">
    <citation type="journal article" date="2003" name="Biochem. Biophys. Res. Commun.">
        <title>Rsp5-Bul1/2 complex is necessary for the HSE-mediated gene expression in budding yeast.</title>
        <authorList>
            <person name="Kaida D."/>
            <person name="Toh-e A."/>
            <person name="Kikuchi Y."/>
        </authorList>
    </citation>
    <scope>FUNCTION OF THE RSP5-BUL1/2 COMPLEX</scope>
</reference>
<reference key="12">
    <citation type="journal article" date="2003" name="Mol. Cell. Biol.">
        <title>Pressure-induced differential regulation of the two tryptophan permeases Tat1 and Tat2 by ubiquitin ligase Rsp5 and its binding proteins, Bul1 and Bul2.</title>
        <authorList>
            <person name="Abe F."/>
            <person name="Iida H."/>
        </authorList>
    </citation>
    <scope>FUNCTION OF THE RSP5-BUL1/2 COMPLEX</scope>
</reference>
<reference key="13">
    <citation type="journal article" date="2004" name="J. Biol. Chem.">
        <title>NPR1 kinase and RSP5-BUL1/2 ubiquitin ligase control GLN3-dependent transcription in Saccharomyces cerevisiae.</title>
        <authorList>
            <person name="Crespo J.L."/>
            <person name="Helliwell S.B."/>
            <person name="Wiederkehr C."/>
            <person name="Demougin P."/>
            <person name="Fowler B."/>
            <person name="Primig M."/>
            <person name="Hall M.N."/>
        </authorList>
    </citation>
    <scope>FUNCTION OF THE RSP5-BUL1/2 COMPLEX</scope>
</reference>
<reference key="14">
    <citation type="journal article" date="2004" name="Mol. Biol. Cell">
        <title>Ubiquitin-mediated targeting of a mutant plasma membrane ATPase, Pma1-7, to the endosomal/vacuolar system in yeast.</title>
        <authorList>
            <person name="Pizzirusso M."/>
            <person name="Chang A."/>
        </authorList>
    </citation>
    <scope>FUNCTION OF THE RSP5-BUL1/2 COMPLEX</scope>
</reference>
<reference key="15">
    <citation type="journal article" date="2004" name="Traffic">
        <title>Protein-protein interactions of ESCRT complexes in the yeast Saccharomyces cerevisiae.</title>
        <authorList>
            <person name="Bowers K."/>
            <person name="Lottridge J."/>
            <person name="Helliwell S.B."/>
            <person name="Goldthwaite L.M."/>
            <person name="Luzio J.P."/>
            <person name="Stevens T.H."/>
        </authorList>
    </citation>
    <scope>INTERACTION WITH HSE1</scope>
</reference>
<reference key="16">
    <citation type="journal article" date="2005" name="EMBO J.">
        <title>The Rsp5 ubiquitin ligase is coupled to and antagonized by the Ubp2 deubiquitinating enzyme.</title>
        <authorList>
            <person name="Kee Y."/>
            <person name="Lyon N."/>
            <person name="Huibregtse J.M."/>
        </authorList>
    </citation>
    <scope>FUNCTION</scope>
    <scope>INTERACTION WITH RUP1 AND UBP2</scope>
</reference>
<reference key="17">
    <citation type="journal article" date="2006" name="J. Biol. Chem.">
        <title>Transduction of the nitrogen signal activating Gln3-mediated transcription is independent of Npr1 kinase and Rsp5-Bul1/2 ubiquitin ligase in Saccharomyces cerevisiae.</title>
        <authorList>
            <person name="Feller A."/>
            <person name="Boeckstaens M."/>
            <person name="Marini A.-M."/>
            <person name="Dubois E."/>
        </authorList>
    </citation>
    <scope>FUNCTION OF THE RSP5-BUL1/2 COMPLEX</scope>
</reference>
<reference key="18">
    <citation type="journal article" date="2007" name="Biosci. Biotechnol. Biochem.">
        <title>Peculiar protein-protein interactions of the novel endoplasmic reticulum membrane protein Rcr1 and ubiquitin ligase Rsp5.</title>
        <authorList>
            <person name="Imai K."/>
            <person name="Noda Y."/>
            <person name="Adachi H."/>
            <person name="Yoda K."/>
        </authorList>
    </citation>
    <scope>INTERACTION WITH RCR1</scope>
</reference>
<reference key="19">
    <citation type="journal article" date="2007" name="Mol. Biol. Cell">
        <title>Hse1, a component of the yeast Hrs-STAM ubiquitin-sorting complex, associates with ubiquitin peptidases and a ligase to control sorting efficiency into multivesicular bodies.</title>
        <authorList>
            <person name="Ren J."/>
            <person name="Kee Y."/>
            <person name="Huibregtse J.M."/>
            <person name="Piper R.C."/>
        </authorList>
    </citation>
    <scope>FUNCTION</scope>
    <scope>INTERACTION WITH HSE1</scope>
</reference>
<reference key="20">
    <citation type="journal article" date="2009" name="Proc. Natl. Acad. Sci. U.S.A.">
        <title>Distinct ubiquitin ligases act sequentially for RNA polymerase II polyubiquitylation.</title>
        <authorList>
            <person name="Harreman M."/>
            <person name="Taschner M."/>
            <person name="Sigurdsson S."/>
            <person name="Anindya R."/>
            <person name="Reid J."/>
            <person name="Somesh B."/>
            <person name="Kong S.E."/>
            <person name="Banks C.A."/>
            <person name="Conaway R.C."/>
            <person name="Conaway J.W."/>
            <person name="Svejstrup J.Q."/>
        </authorList>
    </citation>
    <scope>FUNCTION</scope>
    <scope>CATALYTIC ACTIVITY</scope>
    <scope>IDENTIFICATION IN THE RSP5-UBA1-UBC5 UBIQUITIN LIGASE COMPLEX</scope>
    <scope>INTERACTION WITH UBP2</scope>
</reference>
<reference key="21">
    <citation type="journal article" date="2009" name="Science">
        <title>Global analysis of Cdk1 substrate phosphorylation sites provides insights into evolution.</title>
        <authorList>
            <person name="Holt L.J."/>
            <person name="Tuch B.B."/>
            <person name="Villen J."/>
            <person name="Johnson A.D."/>
            <person name="Gygi S.P."/>
            <person name="Morgan D.O."/>
        </authorList>
    </citation>
    <scope>IDENTIFICATION BY MASS SPECTROMETRY [LARGE SCALE ANALYSIS]</scope>
</reference>
<reference key="22">
    <citation type="journal article" date="2011" name="Eur. J. Cell Biol.">
        <title>Yeast Rsp5 ubiquitin ligase affects the actin cytoskeleton in vivo and in vitro.</title>
        <authorList>
            <person name="Kaminska J."/>
            <person name="Spiess M."/>
            <person name="Stawiecka-Mirota M."/>
            <person name="Monkaityte R."/>
            <person name="Haguenauer-Tsapis R."/>
            <person name="Urban-Grimal D."/>
            <person name="Winsor B."/>
            <person name="Zoladek T."/>
        </authorList>
    </citation>
    <scope>FUNCTION</scope>
    <scope>INTERACTION WITH LAS17; LSB1; LSB2 AND RVS167</scope>
    <scope>SUBCELLULAR LOCATION</scope>
</reference>
<reference key="23">
    <citation type="journal article" date="2012" name="Proteomics">
        <title>Sites of ubiquitin attachment in Saccharomyces cerevisiae.</title>
        <authorList>
            <person name="Starita L.M."/>
            <person name="Lo R.S."/>
            <person name="Eng J.K."/>
            <person name="von Haller P.D."/>
            <person name="Fields S."/>
        </authorList>
    </citation>
    <scope>UBIQUITINATION [LARGE SCALE ANALYSIS] AT LYS-258</scope>
    <scope>IDENTIFICATION BY MASS SPECTROMETRY [LARGE SCALE ANALYSIS]</scope>
</reference>
<reference key="24">
    <citation type="journal article" date="2019" name="Cell Rep.">
        <title>Sequential ubiquitination of ribosomal protein uS3 triggers the degradation of non-functional 18S rRNA.</title>
        <authorList>
            <person name="Sugiyama T."/>
            <person name="Li S."/>
            <person name="Kato M."/>
            <person name="Ikeuchi K."/>
            <person name="Ichimura A."/>
            <person name="Matsuo Y."/>
            <person name="Inada T."/>
        </authorList>
    </citation>
    <scope>FUNCTION</scope>
    <scope>CATALYTIC ACTIVITY</scope>
    <scope>PATHWAY</scope>
</reference>
<reference key="25">
    <citation type="journal article" date="2011" name="EMBO Rep.">
        <title>Structure and function of a HECT domain ubiquitin-binding site.</title>
        <authorList>
            <person name="Kim H.C."/>
            <person name="Steffen A.M."/>
            <person name="Oldham M.L."/>
            <person name="Chen J."/>
            <person name="Huibregtse J.M."/>
        </authorList>
    </citation>
    <scope>X-RAY CRYSTALLOGRAPHY (2.50 ANGSTROMS) OF 384-809 IN COMPLEX WITH UBIQUITIN</scope>
</reference>
<protein>
    <recommendedName>
        <fullName>E3 ubiquitin-protein ligase RSP5</fullName>
        <ecNumber evidence="25 26">2.3.2.26</ecNumber>
    </recommendedName>
    <alternativeName>
        <fullName>HECT-type E3 ubiquitin transferase RSP5</fullName>
    </alternativeName>
    <alternativeName>
        <fullName>Reverses SPT-phenotype protein 5</fullName>
    </alternativeName>
</protein>
<organism>
    <name type="scientific">Saccharomyces cerevisiae (strain ATCC 204508 / S288c)</name>
    <name type="common">Baker's yeast</name>
    <dbReference type="NCBI Taxonomy" id="559292"/>
    <lineage>
        <taxon>Eukaryota</taxon>
        <taxon>Fungi</taxon>
        <taxon>Dikarya</taxon>
        <taxon>Ascomycota</taxon>
        <taxon>Saccharomycotina</taxon>
        <taxon>Saccharomycetes</taxon>
        <taxon>Saccharomycetales</taxon>
        <taxon>Saccharomycetaceae</taxon>
        <taxon>Saccharomyces</taxon>
    </lineage>
</organism>
<gene>
    <name type="primary">RSP5</name>
    <name type="synonym">MDP1</name>
    <name type="synonym">NPI1</name>
    <name type="ordered locus">YER125W</name>
    <name type="ORF">SYGP-ORF41</name>
</gene>